<feature type="chain" id="PRO_0000416557" description="Basic leucine zipper 1">
    <location>
        <begin position="1"/>
        <end position="145"/>
    </location>
</feature>
<feature type="domain" description="bZIP" evidence="1">
    <location>
        <begin position="14"/>
        <end position="77"/>
    </location>
</feature>
<feature type="region of interest" description="Disordered" evidence="2">
    <location>
        <begin position="1"/>
        <end position="39"/>
    </location>
</feature>
<feature type="region of interest" description="Basic motif" evidence="1">
    <location>
        <begin position="16"/>
        <end position="37"/>
    </location>
</feature>
<feature type="region of interest" description="Leucine-zipper" evidence="1">
    <location>
        <begin position="46"/>
        <end position="53"/>
    </location>
</feature>
<feature type="compositionally biased region" description="Polar residues" evidence="2">
    <location>
        <begin position="1"/>
        <end position="11"/>
    </location>
</feature>
<protein>
    <recommendedName>
        <fullName>Basic leucine zipper 1</fullName>
        <shortName>AtbZIP1</shortName>
        <shortName>bZIP protein 1</shortName>
    </recommendedName>
</protein>
<reference key="1">
    <citation type="submission" date="2001-07" db="EMBL/GenBank/DDBJ databases">
        <title>AtbZIP1, a transcription factor in Arabidopsis thaliana.</title>
        <authorList>
            <person name="Wang X."/>
            <person name="Droege-Laser W."/>
        </authorList>
    </citation>
    <scope>NUCLEOTIDE SEQUENCE [MRNA]</scope>
</reference>
<reference key="2">
    <citation type="journal article" date="2000" name="DNA Res.">
        <title>Structural analysis of Arabidopsis thaliana chromosome 5. X. Sequence features of the regions of 3,076,755 bp covered by sixty P1 and TAC clones.</title>
        <authorList>
            <person name="Sato S."/>
            <person name="Nakamura Y."/>
            <person name="Kaneko T."/>
            <person name="Katoh T."/>
            <person name="Asamizu E."/>
            <person name="Kotani H."/>
            <person name="Tabata S."/>
        </authorList>
    </citation>
    <scope>NUCLEOTIDE SEQUENCE [LARGE SCALE GENOMIC DNA]</scope>
    <source>
        <strain>cv. Columbia</strain>
    </source>
</reference>
<reference key="3">
    <citation type="journal article" date="2017" name="Plant J.">
        <title>Araport11: a complete reannotation of the Arabidopsis thaliana reference genome.</title>
        <authorList>
            <person name="Cheng C.Y."/>
            <person name="Krishnakumar V."/>
            <person name="Chan A.P."/>
            <person name="Thibaud-Nissen F."/>
            <person name="Schobel S."/>
            <person name="Town C.D."/>
        </authorList>
    </citation>
    <scope>GENOME REANNOTATION</scope>
    <source>
        <strain>cv. Columbia</strain>
    </source>
</reference>
<reference key="4">
    <citation type="journal article" date="2003" name="Science">
        <title>Empirical analysis of transcriptional activity in the Arabidopsis genome.</title>
        <authorList>
            <person name="Yamada K."/>
            <person name="Lim J."/>
            <person name="Dale J.M."/>
            <person name="Chen H."/>
            <person name="Shinn P."/>
            <person name="Palm C.J."/>
            <person name="Southwick A.M."/>
            <person name="Wu H.C."/>
            <person name="Kim C.J."/>
            <person name="Nguyen M."/>
            <person name="Pham P.K."/>
            <person name="Cheuk R.F."/>
            <person name="Karlin-Newmann G."/>
            <person name="Liu S.X."/>
            <person name="Lam B."/>
            <person name="Sakano H."/>
            <person name="Wu T."/>
            <person name="Yu G."/>
            <person name="Miranda M."/>
            <person name="Quach H.L."/>
            <person name="Tripp M."/>
            <person name="Chang C.H."/>
            <person name="Lee J.M."/>
            <person name="Toriumi M.J."/>
            <person name="Chan M.M."/>
            <person name="Tang C.C."/>
            <person name="Onodera C.S."/>
            <person name="Deng J.M."/>
            <person name="Akiyama K."/>
            <person name="Ansari Y."/>
            <person name="Arakawa T."/>
            <person name="Banh J."/>
            <person name="Banno F."/>
            <person name="Bowser L."/>
            <person name="Brooks S.Y."/>
            <person name="Carninci P."/>
            <person name="Chao Q."/>
            <person name="Choy N."/>
            <person name="Enju A."/>
            <person name="Goldsmith A.D."/>
            <person name="Gurjal M."/>
            <person name="Hansen N.F."/>
            <person name="Hayashizaki Y."/>
            <person name="Johnson-Hopson C."/>
            <person name="Hsuan V.W."/>
            <person name="Iida K."/>
            <person name="Karnes M."/>
            <person name="Khan S."/>
            <person name="Koesema E."/>
            <person name="Ishida J."/>
            <person name="Jiang P.X."/>
            <person name="Jones T."/>
            <person name="Kawai J."/>
            <person name="Kamiya A."/>
            <person name="Meyers C."/>
            <person name="Nakajima M."/>
            <person name="Narusaka M."/>
            <person name="Seki M."/>
            <person name="Sakurai T."/>
            <person name="Satou M."/>
            <person name="Tamse R."/>
            <person name="Vaysberg M."/>
            <person name="Wallender E.K."/>
            <person name="Wong C."/>
            <person name="Yamamura Y."/>
            <person name="Yuan S."/>
            <person name="Shinozaki K."/>
            <person name="Davis R.W."/>
            <person name="Theologis A."/>
            <person name="Ecker J.R."/>
        </authorList>
    </citation>
    <scope>NUCLEOTIDE SEQUENCE [LARGE SCALE MRNA]</scope>
    <source>
        <strain>cv. Columbia</strain>
    </source>
</reference>
<reference key="5">
    <citation type="submission" date="2002-03" db="EMBL/GenBank/DDBJ databases">
        <title>Full-length cDNA from Arabidopsis thaliana.</title>
        <authorList>
            <person name="Brover V.V."/>
            <person name="Troukhan M.E."/>
            <person name="Alexandrov N.A."/>
            <person name="Lu Y.-P."/>
            <person name="Flavell R.B."/>
            <person name="Feldmann K.A."/>
        </authorList>
    </citation>
    <scope>NUCLEOTIDE SEQUENCE [LARGE SCALE MRNA]</scope>
</reference>
<reference key="6">
    <citation type="journal article" date="2002" name="Trends Plant Sci.">
        <title>bZIP transcription factors in Arabidopsis.</title>
        <authorList>
            <person name="Jakoby M."/>
            <person name="Weisshaar B."/>
            <person name="Droege-Laser W."/>
            <person name="Vicente-Carbajosa J."/>
            <person name="Tiedemann J."/>
            <person name="Kroj T."/>
            <person name="Parcy F."/>
        </authorList>
    </citation>
    <scope>GENE FAMILY</scope>
    <scope>NOMENCLATURE</scope>
</reference>
<reference key="7">
    <citation type="journal article" date="2006" name="Plant J.">
        <title>Two-hybrid protein-protein interaction analysis in Arabidopsis protoplasts: establishment of a heterodimerization map of group C and group S bZIP transcription factors.</title>
        <authorList>
            <person name="Ehlert A."/>
            <person name="Weltmeier F."/>
            <person name="Wang X."/>
            <person name="Mayer C.S."/>
            <person name="Smeekens S."/>
            <person name="Vicente-Carbajosa J."/>
            <person name="Droege-Laser W."/>
        </authorList>
    </citation>
    <scope>INTERACTION WITH BZIP4; BZIP9; BZIP10; BZIP11; BZIP25; BZIP42; BZIP44; BZIP58 AND BZIP63</scope>
</reference>
<reference key="8">
    <citation type="journal article" date="2009" name="Plant Mol. Biol.">
        <title>Expression patterns within the Arabidopsis C/S1 bZIP transcription factor network: availability of heterodimerization partners controls gene expression during stress response and development.</title>
        <authorList>
            <person name="Weltmeier F."/>
            <person name="Rahmani F."/>
            <person name="Ehlert A."/>
            <person name="Dietrich K."/>
            <person name="Schuetze K."/>
            <person name="Wang X."/>
            <person name="Chaban C."/>
            <person name="Hanson J."/>
            <person name="Teige M."/>
            <person name="Harter K."/>
            <person name="Vicente-Carbajosa J."/>
            <person name="Smeekens S."/>
            <person name="Droege-Laser W."/>
        </authorList>
    </citation>
    <scope>TISSUE SPECIFICITY</scope>
    <scope>DEVELOPMENTAL STAGE</scope>
    <scope>INDUCTION BY GLUCOSE AND PSEUDOMONAS SYRINGAE</scope>
    <source>
        <strain>cv. Columbia</strain>
    </source>
</reference>
<reference key="9">
    <citation type="journal article" date="2010" name="Mol. Plant">
        <title>The arabidopsis bZIP1 transcription factor is involved in sugar signaling, protein networking, and DNA binding.</title>
        <authorList>
            <person name="Kang S.G."/>
            <person name="Price J."/>
            <person name="Lin P.-C."/>
            <person name="Hong J.C."/>
            <person name="Jang J.-C."/>
        </authorList>
    </citation>
    <scope>FUNCTION</scope>
    <scope>DISRUPTION PHENOTYPE</scope>
    <scope>INDUCTION BY GLUCOSE AND MANNOSE</scope>
    <scope>TISSUE SPECIFICITY</scope>
    <scope>INTERACTION WITH ZFP7; BZIP10; BZIP11; BZIP25; BZIP44 AND BZIP63</scope>
</reference>
<reference key="10">
    <citation type="journal article" date="2011" name="Plant Cell">
        <title>Heterodimers of the Arabidopsis transcription factors bZIP1 and bZIP53 reprogram amino acid metabolism during low energy stress.</title>
        <authorList>
            <person name="Dietrich K."/>
            <person name="Weltmeier F."/>
            <person name="Ehlert A."/>
            <person name="Weiste C."/>
            <person name="Stahl M."/>
            <person name="Harter K."/>
            <person name="Droege-Laser W."/>
        </authorList>
    </citation>
    <scope>FUNCTION</scope>
    <scope>INTERACTION WITH BZIP53</scope>
    <scope>INDUCTION BY STARVATION</scope>
</reference>
<reference key="11">
    <citation type="journal article" date="2014" name="Plant Mol. Biol.">
        <title>Transcription factors that directly regulate the expression of CSLA9 encoding mannan synthase in Arabidopsis thaliana.</title>
        <authorList>
            <person name="Kim W.C."/>
            <person name="Reca I.B."/>
            <person name="Kim Y."/>
            <person name="Park S."/>
            <person name="Thomashow M.F."/>
            <person name="Keegstra K."/>
            <person name="Han K.H."/>
        </authorList>
    </citation>
    <scope>FUNCTION</scope>
</reference>
<reference key="12">
    <citation type="journal article" date="2015" name="Elife">
        <title>SnRK1-triggered switch of bZIP63 dimerization mediates the low-energy response in plants.</title>
        <authorList>
            <person name="Mair A."/>
            <person name="Pedrotti L."/>
            <person name="Wurzinger B."/>
            <person name="Anrather D."/>
            <person name="Simeunovic A."/>
            <person name="Weiste C."/>
            <person name="Valerio C."/>
            <person name="Dietrich K."/>
            <person name="Kirchler T."/>
            <person name="Naegele T."/>
            <person name="Vicente Carbajosa J."/>
            <person name="Hanson J."/>
            <person name="Baena-Gonzalez E."/>
            <person name="Chaban C."/>
            <person name="Weckwerth W."/>
            <person name="Droege-Laser W."/>
            <person name="Teige M."/>
        </authorList>
    </citation>
    <scope>INTERACTION WITH BZIP63</scope>
</reference>
<accession>Q9FGX2</accession>
<comment type="function">
    <text evidence="5 6 7">Transcription factor that binds to the C-box-like motif (5'-TGCTGACGTCA-3') and G-box-like motif (5'-CCACGTGGCC-3'), ABRE elements, of gene promoters involved in sugar signaling. Activated by low energy stress both at transcriptional and post-transcriptional mechanisms. Promotes dark-induced senescence and participates in the transcriptional reprogramming of amino acid metabolism during the dark-induced starvation response (PubMed:20080816, PubMed:21278122). Transcription activator of the mannan synthase CSLA9. Recognizes and binds to DNA-specific sequence of CSLA9 promoter (PubMed:24243147).</text>
</comment>
<comment type="subunit">
    <text evidence="3 5 6 8">Interacts with ZFP7, BZIP4, BZIP9, BZIP10, BZIP11, BZIP25, BZIP42, BZIP44, BZIP53, BZIP58 and BZIP63.</text>
</comment>
<comment type="interaction">
    <interactant intactId="EBI-942623">
        <id>Q9FGX2</id>
    </interactant>
    <interactant intactId="EBI-942648">
        <id>O22763</id>
        <label>BZIP10</label>
    </interactant>
    <organismsDiffer>false</organismsDiffer>
    <experiments>3</experiments>
</comment>
<comment type="interaction">
    <interactant intactId="EBI-942623">
        <id>Q9FGX2</id>
    </interactant>
    <interactant intactId="EBI-942769">
        <id>O65683</id>
        <label>BZIP11</label>
    </interactant>
    <organismsDiffer>false</organismsDiffer>
    <experiments>5</experiments>
</comment>
<comment type="interaction">
    <interactant intactId="EBI-942623">
        <id>Q9FGX2</id>
    </interactant>
    <interactant intactId="EBI-942696">
        <id>Q9M1G6</id>
        <label>BZIP25</label>
    </interactant>
    <organismsDiffer>false</organismsDiffer>
    <experiments>6</experiments>
</comment>
<comment type="interaction">
    <interactant intactId="EBI-942623">
        <id>Q9FGX2</id>
    </interactant>
    <interactant intactId="EBI-942804">
        <id>C0Z2L5</id>
        <label>BZIP44</label>
    </interactant>
    <organismsDiffer>false</organismsDiffer>
    <experiments>5</experiments>
</comment>
<comment type="interaction">
    <interactant intactId="EBI-942623">
        <id>Q9FGX2</id>
    </interactant>
    <interactant intactId="EBI-942713">
        <id>B9DGI8</id>
        <label>BZIP63</label>
    </interactant>
    <organismsDiffer>false</organismsDiffer>
    <experiments>4</experiments>
</comment>
<comment type="interaction">
    <interactant intactId="EBI-942623">
        <id>Q9FGX2</id>
    </interactant>
    <interactant intactId="EBI-942633">
        <id>Q9FUD3</id>
        <label>BZIP9</label>
    </interactant>
    <organismsDiffer>false</organismsDiffer>
    <experiments>3</experiments>
</comment>
<comment type="subcellular location">
    <subcellularLocation>
        <location evidence="1">Nucleus</location>
    </subcellularLocation>
</comment>
<comment type="tissue specificity">
    <text evidence="4 5">Expressed in both shoots, including young leaves, stipulae and trichomes (except in cotyledons and hypocotyl), and roots, including vascular tissues (e.g. in both the phloem and the xylem). Present in seeds and pollen. Restricted to vasculatures and roots in the presence of sucrose or glucose.</text>
</comment>
<comment type="developmental stage">
    <text evidence="4">Expressed in seeds during late stage of development.</text>
</comment>
<comment type="induction">
    <text evidence="4 5 6">Reversibly repressed by glucose and mannose. Slowly induced by Pseudomonas syringae. Induced in roots upon cold and salt stress but then repressed in leaves. Promoted by low energy stress and dark-induced starvation.</text>
</comment>
<comment type="disruption phenotype">
    <text evidence="5">Reduced requirement for exogenous sugar for seedling growth and higher rates of true leaf development.</text>
</comment>
<comment type="similarity">
    <text evidence="9">Belongs to the bZIP family.</text>
</comment>
<organism>
    <name type="scientific">Arabidopsis thaliana</name>
    <name type="common">Mouse-ear cress</name>
    <dbReference type="NCBI Taxonomy" id="3702"/>
    <lineage>
        <taxon>Eukaryota</taxon>
        <taxon>Viridiplantae</taxon>
        <taxon>Streptophyta</taxon>
        <taxon>Embryophyta</taxon>
        <taxon>Tracheophyta</taxon>
        <taxon>Spermatophyta</taxon>
        <taxon>Magnoliopsida</taxon>
        <taxon>eudicotyledons</taxon>
        <taxon>Gunneridae</taxon>
        <taxon>Pentapetalae</taxon>
        <taxon>rosids</taxon>
        <taxon>malvids</taxon>
        <taxon>Brassicales</taxon>
        <taxon>Brassicaceae</taxon>
        <taxon>Camelineae</taxon>
        <taxon>Arabidopsis</taxon>
    </lineage>
</organism>
<proteinExistence type="evidence at protein level"/>
<name>BZIP1_ARATH</name>
<keyword id="KW-0010">Activator</keyword>
<keyword id="KW-0238">DNA-binding</keyword>
<keyword id="KW-0539">Nucleus</keyword>
<keyword id="KW-1185">Reference proteome</keyword>
<keyword id="KW-0804">Transcription</keyword>
<keyword id="KW-0805">Transcription regulation</keyword>
<sequence>MANAEKTSSGSDIDEKKRKRKLSNRESARRSRLKKQKLMEDTIHEISSLERRIKENSERCRAVKQRLDSVETENAGLRSEKIWLSSYVSDLENMIATTSLTLTQSGGGDCVDDQNANAGIAVGDCRRTPWKLSCGSLQPMASFKT</sequence>
<dbReference type="EMBL" id="AF400618">
    <property type="protein sequence ID" value="AAK94022.1"/>
    <property type="molecule type" value="mRNA"/>
</dbReference>
<dbReference type="EMBL" id="AB023034">
    <property type="protein sequence ID" value="BAB09915.1"/>
    <property type="molecule type" value="Genomic_DNA"/>
</dbReference>
<dbReference type="EMBL" id="CP002688">
    <property type="protein sequence ID" value="AED95813.1"/>
    <property type="molecule type" value="Genomic_DNA"/>
</dbReference>
<dbReference type="EMBL" id="AY136307">
    <property type="protein sequence ID" value="AAM96973.1"/>
    <property type="molecule type" value="mRNA"/>
</dbReference>
<dbReference type="EMBL" id="BT000400">
    <property type="protein sequence ID" value="AAN15719.1"/>
    <property type="molecule type" value="mRNA"/>
</dbReference>
<dbReference type="EMBL" id="AY088207">
    <property type="protein sequence ID" value="AAM65749.1"/>
    <property type="molecule type" value="mRNA"/>
</dbReference>
<dbReference type="RefSeq" id="NP_199756.1">
    <property type="nucleotide sequence ID" value="NM_124322.3"/>
</dbReference>
<dbReference type="SMR" id="Q9FGX2"/>
<dbReference type="BioGRID" id="20251">
    <property type="interactions" value="18"/>
</dbReference>
<dbReference type="FunCoup" id="Q9FGX2">
    <property type="interactions" value="6"/>
</dbReference>
<dbReference type="IntAct" id="Q9FGX2">
    <property type="interactions" value="21"/>
</dbReference>
<dbReference type="STRING" id="3702.Q9FGX2"/>
<dbReference type="iPTMnet" id="Q9FGX2"/>
<dbReference type="PaxDb" id="3702-AT5G49450.1"/>
<dbReference type="ProteomicsDB" id="240255"/>
<dbReference type="EnsemblPlants" id="AT5G49450.1">
    <property type="protein sequence ID" value="AT5G49450.1"/>
    <property type="gene ID" value="AT5G49450"/>
</dbReference>
<dbReference type="GeneID" id="835005"/>
<dbReference type="Gramene" id="AT5G49450.1">
    <property type="protein sequence ID" value="AT5G49450.1"/>
    <property type="gene ID" value="AT5G49450"/>
</dbReference>
<dbReference type="KEGG" id="ath:AT5G49450"/>
<dbReference type="Araport" id="AT5G49450"/>
<dbReference type="TAIR" id="AT5G49450">
    <property type="gene designation" value="BZIP1"/>
</dbReference>
<dbReference type="eggNOG" id="ENOG502R7IP">
    <property type="taxonomic scope" value="Eukaryota"/>
</dbReference>
<dbReference type="HOGENOM" id="CLU_1779969_0_0_1"/>
<dbReference type="InParanoid" id="Q9FGX2"/>
<dbReference type="OMA" id="LMEDTIH"/>
<dbReference type="OrthoDB" id="551672at2759"/>
<dbReference type="PhylomeDB" id="Q9FGX2"/>
<dbReference type="PRO" id="PR:Q9FGX2"/>
<dbReference type="Proteomes" id="UP000006548">
    <property type="component" value="Chromosome 5"/>
</dbReference>
<dbReference type="ExpressionAtlas" id="Q9FGX2">
    <property type="expression patterns" value="baseline and differential"/>
</dbReference>
<dbReference type="GO" id="GO:0005634">
    <property type="term" value="C:nucleus"/>
    <property type="evidence" value="ECO:0000314"/>
    <property type="project" value="TAIR"/>
</dbReference>
<dbReference type="GO" id="GO:0003700">
    <property type="term" value="F:DNA-binding transcription factor activity"/>
    <property type="evidence" value="ECO:0000314"/>
    <property type="project" value="UniProtKB"/>
</dbReference>
<dbReference type="GO" id="GO:0046982">
    <property type="term" value="F:protein heterodimerization activity"/>
    <property type="evidence" value="ECO:0000353"/>
    <property type="project" value="UniProtKB"/>
</dbReference>
<dbReference type="GO" id="GO:0043565">
    <property type="term" value="F:sequence-specific DNA binding"/>
    <property type="evidence" value="ECO:0000353"/>
    <property type="project" value="TAIR"/>
</dbReference>
<dbReference type="GO" id="GO:0000976">
    <property type="term" value="F:transcription cis-regulatory region binding"/>
    <property type="evidence" value="ECO:0000353"/>
    <property type="project" value="TAIR"/>
</dbReference>
<dbReference type="GO" id="GO:0009901">
    <property type="term" value="P:anther dehiscence"/>
    <property type="evidence" value="ECO:0000315"/>
    <property type="project" value="TAIR"/>
</dbReference>
<dbReference type="GO" id="GO:0071333">
    <property type="term" value="P:cellular response to glucose stimulus"/>
    <property type="evidence" value="ECO:0000270"/>
    <property type="project" value="UniProtKB"/>
</dbReference>
<dbReference type="GO" id="GO:0009267">
    <property type="term" value="P:cellular response to starvation"/>
    <property type="evidence" value="ECO:0000270"/>
    <property type="project" value="UniProtKB"/>
</dbReference>
<dbReference type="GO" id="GO:0045893">
    <property type="term" value="P:positive regulation of DNA-templated transcription"/>
    <property type="evidence" value="ECO:0000314"/>
    <property type="project" value="TAIR"/>
</dbReference>
<dbReference type="GO" id="GO:0006521">
    <property type="term" value="P:regulation of amino acid metabolic process"/>
    <property type="evidence" value="ECO:0000315"/>
    <property type="project" value="UniProtKB"/>
</dbReference>
<dbReference type="GO" id="GO:0009617">
    <property type="term" value="P:response to bacterium"/>
    <property type="evidence" value="ECO:0000270"/>
    <property type="project" value="UniProtKB"/>
</dbReference>
<dbReference type="GO" id="GO:0006970">
    <property type="term" value="P:response to osmotic stress"/>
    <property type="evidence" value="ECO:0000315"/>
    <property type="project" value="TAIR"/>
</dbReference>
<dbReference type="GO" id="GO:0009651">
    <property type="term" value="P:response to salt stress"/>
    <property type="evidence" value="ECO:0000315"/>
    <property type="project" value="TAIR"/>
</dbReference>
<dbReference type="GO" id="GO:0010182">
    <property type="term" value="P:sugar mediated signaling pathway"/>
    <property type="evidence" value="ECO:0000315"/>
    <property type="project" value="UniProtKB"/>
</dbReference>
<dbReference type="CDD" id="cd14702">
    <property type="entry name" value="bZIP_plant_GBF1"/>
    <property type="match status" value="1"/>
</dbReference>
<dbReference type="InterPro" id="IPR004827">
    <property type="entry name" value="bZIP"/>
</dbReference>
<dbReference type="InterPro" id="IPR045314">
    <property type="entry name" value="bZIP_plant_GBF1"/>
</dbReference>
<dbReference type="InterPro" id="IPR046347">
    <property type="entry name" value="bZIP_sf"/>
</dbReference>
<dbReference type="PANTHER" id="PTHR45764:SF31">
    <property type="entry name" value="BASIC LEUCINE ZIPPER 1"/>
    <property type="match status" value="1"/>
</dbReference>
<dbReference type="PANTHER" id="PTHR45764">
    <property type="entry name" value="BZIP TRANSCRIPTION FACTOR 44"/>
    <property type="match status" value="1"/>
</dbReference>
<dbReference type="Pfam" id="PF07716">
    <property type="entry name" value="bZIP_2"/>
    <property type="match status" value="1"/>
</dbReference>
<dbReference type="SMART" id="SM00338">
    <property type="entry name" value="BRLZ"/>
    <property type="match status" value="1"/>
</dbReference>
<dbReference type="SUPFAM" id="SSF57959">
    <property type="entry name" value="Leucine zipper domain"/>
    <property type="match status" value="1"/>
</dbReference>
<dbReference type="PROSITE" id="PS50217">
    <property type="entry name" value="BZIP"/>
    <property type="match status" value="1"/>
</dbReference>
<dbReference type="PROSITE" id="PS00036">
    <property type="entry name" value="BZIP_BASIC"/>
    <property type="match status" value="1"/>
</dbReference>
<gene>
    <name type="primary">BZIP1</name>
    <name type="ordered locus">At5g49450</name>
    <name type="ORF">K7J8.13</name>
</gene>
<evidence type="ECO:0000255" key="1">
    <source>
        <dbReference type="PROSITE-ProRule" id="PRU00978"/>
    </source>
</evidence>
<evidence type="ECO:0000256" key="2">
    <source>
        <dbReference type="SAM" id="MobiDB-lite"/>
    </source>
</evidence>
<evidence type="ECO:0000269" key="3">
    <source>
    </source>
</evidence>
<evidence type="ECO:0000269" key="4">
    <source>
    </source>
</evidence>
<evidence type="ECO:0000269" key="5">
    <source>
    </source>
</evidence>
<evidence type="ECO:0000269" key="6">
    <source>
    </source>
</evidence>
<evidence type="ECO:0000269" key="7">
    <source>
    </source>
</evidence>
<evidence type="ECO:0000269" key="8">
    <source>
    </source>
</evidence>
<evidence type="ECO:0000305" key="9"/>